<name>PRIH_ARATH</name>
<comment type="function">
    <text evidence="1">May act as a DNA primase.</text>
</comment>
<comment type="cofactor">
    <cofactor evidence="1">
        <name>Mg(2+)</name>
        <dbReference type="ChEBI" id="CHEBI:18420"/>
    </cofactor>
    <text evidence="1">Binds two Mg(2+) per subunit.</text>
</comment>
<comment type="caution">
    <text evidence="3">This truncated primase was identified on the basis of sequence homologies, but no information is available about whether this protein is functional.</text>
</comment>
<comment type="sequence caution" evidence="2">
    <conflict type="erroneous gene model prediction">
        <sequence resource="EMBL-CDS" id="AAD25753"/>
    </conflict>
</comment>
<reference key="1">
    <citation type="journal article" date="2000" name="Nature">
        <title>Sequence and analysis of chromosome 1 of the plant Arabidopsis thaliana.</title>
        <authorList>
            <person name="Theologis A."/>
            <person name="Ecker J.R."/>
            <person name="Palm C.J."/>
            <person name="Federspiel N.A."/>
            <person name="Kaul S."/>
            <person name="White O."/>
            <person name="Alonso J."/>
            <person name="Altafi H."/>
            <person name="Araujo R."/>
            <person name="Bowman C.L."/>
            <person name="Brooks S.Y."/>
            <person name="Buehler E."/>
            <person name="Chan A."/>
            <person name="Chao Q."/>
            <person name="Chen H."/>
            <person name="Cheuk R.F."/>
            <person name="Chin C.W."/>
            <person name="Chung M.K."/>
            <person name="Conn L."/>
            <person name="Conway A.B."/>
            <person name="Conway A.R."/>
            <person name="Creasy T.H."/>
            <person name="Dewar K."/>
            <person name="Dunn P."/>
            <person name="Etgu P."/>
            <person name="Feldblyum T.V."/>
            <person name="Feng J.-D."/>
            <person name="Fong B."/>
            <person name="Fujii C.Y."/>
            <person name="Gill J.E."/>
            <person name="Goldsmith A.D."/>
            <person name="Haas B."/>
            <person name="Hansen N.F."/>
            <person name="Hughes B."/>
            <person name="Huizar L."/>
            <person name="Hunter J.L."/>
            <person name="Jenkins J."/>
            <person name="Johnson-Hopson C."/>
            <person name="Khan S."/>
            <person name="Khaykin E."/>
            <person name="Kim C.J."/>
            <person name="Koo H.L."/>
            <person name="Kremenetskaia I."/>
            <person name="Kurtz D.B."/>
            <person name="Kwan A."/>
            <person name="Lam B."/>
            <person name="Langin-Hooper S."/>
            <person name="Lee A."/>
            <person name="Lee J.M."/>
            <person name="Lenz C.A."/>
            <person name="Li J.H."/>
            <person name="Li Y.-P."/>
            <person name="Lin X."/>
            <person name="Liu S.X."/>
            <person name="Liu Z.A."/>
            <person name="Luros J.S."/>
            <person name="Maiti R."/>
            <person name="Marziali A."/>
            <person name="Militscher J."/>
            <person name="Miranda M."/>
            <person name="Nguyen M."/>
            <person name="Nierman W.C."/>
            <person name="Osborne B.I."/>
            <person name="Pai G."/>
            <person name="Peterson J."/>
            <person name="Pham P.K."/>
            <person name="Rizzo M."/>
            <person name="Rooney T."/>
            <person name="Rowley D."/>
            <person name="Sakano H."/>
            <person name="Salzberg S.L."/>
            <person name="Schwartz J.R."/>
            <person name="Shinn P."/>
            <person name="Southwick A.M."/>
            <person name="Sun H."/>
            <person name="Tallon L.J."/>
            <person name="Tambunga G."/>
            <person name="Toriumi M.J."/>
            <person name="Town C.D."/>
            <person name="Utterback T."/>
            <person name="Van Aken S."/>
            <person name="Vaysberg M."/>
            <person name="Vysotskaia V.S."/>
            <person name="Walker M."/>
            <person name="Wu D."/>
            <person name="Yu G."/>
            <person name="Fraser C.M."/>
            <person name="Venter J.C."/>
            <person name="Davis R.W."/>
        </authorList>
    </citation>
    <scope>NUCLEOTIDE SEQUENCE [LARGE SCALE GENOMIC DNA]</scope>
    <source>
        <strain>cv. Columbia</strain>
    </source>
</reference>
<reference key="2">
    <citation type="journal article" date="2017" name="Plant J.">
        <title>Araport11: a complete reannotation of the Arabidopsis thaliana reference genome.</title>
        <authorList>
            <person name="Cheng C.Y."/>
            <person name="Krishnakumar V."/>
            <person name="Chan A.P."/>
            <person name="Thibaud-Nissen F."/>
            <person name="Schobel S."/>
            <person name="Town C.D."/>
        </authorList>
    </citation>
    <scope>GENOME REANNOTATION</scope>
    <source>
        <strain>cv. Columbia</strain>
    </source>
</reference>
<reference key="3">
    <citation type="journal article" date="2013" name="BMC Plant Biol.">
        <title>The Arabidopsis At1g30680 gene encodes a homologue to the phage T7 gp4 protein that has both DNA primase and DNA helicase activities.</title>
        <authorList>
            <person name="Diray-Arce J."/>
            <person name="Liu B."/>
            <person name="Cupp J.D."/>
            <person name="Hunt T."/>
            <person name="Nielsen B.L."/>
        </authorList>
    </citation>
    <scope>IDENTIFICATION</scope>
</reference>
<organism>
    <name type="scientific">Arabidopsis thaliana</name>
    <name type="common">Mouse-ear cress</name>
    <dbReference type="NCBI Taxonomy" id="3702"/>
    <lineage>
        <taxon>Eukaryota</taxon>
        <taxon>Viridiplantae</taxon>
        <taxon>Streptophyta</taxon>
        <taxon>Embryophyta</taxon>
        <taxon>Tracheophyta</taxon>
        <taxon>Spermatophyta</taxon>
        <taxon>Magnoliopsida</taxon>
        <taxon>eudicotyledons</taxon>
        <taxon>Gunneridae</taxon>
        <taxon>Pentapetalae</taxon>
        <taxon>rosids</taxon>
        <taxon>malvids</taxon>
        <taxon>Brassicales</taxon>
        <taxon>Brassicaceae</taxon>
        <taxon>Camelineae</taxon>
        <taxon>Arabidopsis</taxon>
    </lineage>
</organism>
<feature type="chain" id="PRO_0000422120" description="Primase homolog protein">
    <location>
        <begin position="1"/>
        <end position="337"/>
    </location>
</feature>
<feature type="domain" description="Toprim">
    <location>
        <begin position="205"/>
        <end position="304"/>
    </location>
</feature>
<feature type="binding site" evidence="1">
    <location>
        <position position="211"/>
    </location>
    <ligand>
        <name>Mg(2+)</name>
        <dbReference type="ChEBI" id="CHEBI:18420"/>
        <label>1</label>
        <note>catalytic</note>
    </ligand>
</feature>
<feature type="binding site" evidence="1">
    <location>
        <position position="273"/>
    </location>
    <ligand>
        <name>Mg(2+)</name>
        <dbReference type="ChEBI" id="CHEBI:18420"/>
        <label>1</label>
        <note>catalytic</note>
    </ligand>
</feature>
<feature type="binding site" evidence="1">
    <location>
        <position position="273"/>
    </location>
    <ligand>
        <name>Mg(2+)</name>
        <dbReference type="ChEBI" id="CHEBI:18420"/>
        <label>2</label>
    </ligand>
</feature>
<feature type="binding site" evidence="1">
    <location>
        <position position="275"/>
    </location>
    <ligand>
        <name>Mg(2+)</name>
        <dbReference type="ChEBI" id="CHEBI:18420"/>
        <label>2</label>
    </ligand>
</feature>
<evidence type="ECO:0000250" key="1"/>
<evidence type="ECO:0000305" key="2"/>
<evidence type="ECO:0000305" key="3">
    <source>
    </source>
</evidence>
<dbReference type="EC" id="2.7.7.-"/>
<dbReference type="EMBL" id="AC007060">
    <property type="protein sequence ID" value="AAD25753.1"/>
    <property type="status" value="ALT_SEQ"/>
    <property type="molecule type" value="Genomic_DNA"/>
</dbReference>
<dbReference type="EMBL" id="CP002684">
    <property type="protein sequence ID" value="AEE31257.1"/>
    <property type="molecule type" value="Genomic_DNA"/>
</dbReference>
<dbReference type="PIR" id="A86432">
    <property type="entry name" value="A86432"/>
</dbReference>
<dbReference type="RefSeq" id="NP_174354.4">
    <property type="nucleotide sequence ID" value="NM_102803.4"/>
</dbReference>
<dbReference type="SMR" id="F4I6E6"/>
<dbReference type="STRING" id="3702.F4I6E6"/>
<dbReference type="PaxDb" id="3702-AT1G30660.1"/>
<dbReference type="ProteomicsDB" id="236601"/>
<dbReference type="EnsemblPlants" id="AT1G30660.1">
    <property type="protein sequence ID" value="AT1G30660.1"/>
    <property type="gene ID" value="AT1G30660"/>
</dbReference>
<dbReference type="GeneID" id="839946"/>
<dbReference type="Gramene" id="AT1G30660.1">
    <property type="protein sequence ID" value="AT1G30660.1"/>
    <property type="gene ID" value="AT1G30660"/>
</dbReference>
<dbReference type="KEGG" id="ath:AT1G30660"/>
<dbReference type="Araport" id="AT1G30660"/>
<dbReference type="TAIR" id="AT1G30660">
    <property type="gene designation" value="TWINKY"/>
</dbReference>
<dbReference type="eggNOG" id="ENOG502QPXS">
    <property type="taxonomic scope" value="Eukaryota"/>
</dbReference>
<dbReference type="HOGENOM" id="CLU_070942_0_0_1"/>
<dbReference type="InParanoid" id="F4I6E6"/>
<dbReference type="OrthoDB" id="275278at2759"/>
<dbReference type="PRO" id="PR:F4I6E6"/>
<dbReference type="Proteomes" id="UP000006548">
    <property type="component" value="Chromosome 1"/>
</dbReference>
<dbReference type="ExpressionAtlas" id="F4I6E6">
    <property type="expression patterns" value="baseline and differential"/>
</dbReference>
<dbReference type="GO" id="GO:0043139">
    <property type="term" value="F:5'-3' DNA helicase activity"/>
    <property type="evidence" value="ECO:0007669"/>
    <property type="project" value="InterPro"/>
</dbReference>
<dbReference type="GO" id="GO:0046872">
    <property type="term" value="F:metal ion binding"/>
    <property type="evidence" value="ECO:0007669"/>
    <property type="project" value="UniProtKB-KW"/>
</dbReference>
<dbReference type="GO" id="GO:0016779">
    <property type="term" value="F:nucleotidyltransferase activity"/>
    <property type="evidence" value="ECO:0007669"/>
    <property type="project" value="UniProtKB-KW"/>
</dbReference>
<dbReference type="GO" id="GO:0003697">
    <property type="term" value="F:single-stranded DNA binding"/>
    <property type="evidence" value="ECO:0007669"/>
    <property type="project" value="InterPro"/>
</dbReference>
<dbReference type="CDD" id="cd01029">
    <property type="entry name" value="TOPRIM_primases"/>
    <property type="match status" value="1"/>
</dbReference>
<dbReference type="Gene3D" id="3.40.1360.10">
    <property type="match status" value="1"/>
</dbReference>
<dbReference type="InterPro" id="IPR034154">
    <property type="entry name" value="TOPRIM_DnaG/twinkle"/>
</dbReference>
<dbReference type="InterPro" id="IPR006171">
    <property type="entry name" value="TOPRIM_dom"/>
</dbReference>
<dbReference type="InterPro" id="IPR027032">
    <property type="entry name" value="Twinkle-like"/>
</dbReference>
<dbReference type="PANTHER" id="PTHR12873">
    <property type="entry name" value="T7-LIKE MITOCHONDRIAL DNA HELICASE"/>
    <property type="match status" value="1"/>
</dbReference>
<dbReference type="PANTHER" id="PTHR12873:SF0">
    <property type="entry name" value="TWINKLE MTDNA HELICASE"/>
    <property type="match status" value="1"/>
</dbReference>
<dbReference type="Pfam" id="PF13662">
    <property type="entry name" value="Toprim_4"/>
    <property type="match status" value="1"/>
</dbReference>
<dbReference type="SMART" id="SM00493">
    <property type="entry name" value="TOPRIM"/>
    <property type="match status" value="1"/>
</dbReference>
<dbReference type="SUPFAM" id="SSF56731">
    <property type="entry name" value="DNA primase core"/>
    <property type="match status" value="1"/>
</dbReference>
<gene>
    <name type="ordered locus">At1g30660</name>
    <name type="ORF">T5I8.11</name>
</gene>
<accession>F4I6E6</accession>
<accession>Q9SA81</accession>
<proteinExistence type="inferred from homology"/>
<protein>
    <recommendedName>
        <fullName>Primase homolog protein</fullName>
        <ecNumber>2.7.7.-</ecNumber>
    </recommendedName>
</protein>
<keyword id="KW-0460">Magnesium</keyword>
<keyword id="KW-0479">Metal-binding</keyword>
<keyword id="KW-0548">Nucleotidyltransferase</keyword>
<keyword id="KW-1185">Reference proteome</keyword>
<keyword id="KW-0808">Transferase</keyword>
<sequence length="337" mass="37807">MSENVPDHQSTNGFSSSDFFVPEEEAGKKVVLSKLVTLMRKLSEQGIDAQNCPPGVRSCLICPKCEVGDSGEKSLTLYIYPDGSSAKWTCRRKCGLKGVLQVDGKLVSKDPIGKVERKITVESIKLEPLCDEIQDFFAARAISGKTLERNRVMQKRIDDEIVIAFTYWQRGELVSCKYRSLTKKFVQERNTRKILYGLDDIEETSEIIIVEGEPDKLAMEEAGFFNCVSVPDGAPETVSSKEIPSESKDTAFKYIWNCNDYLKKASRIVIATDGDGPGQALAEELARRLGKERCWLVKWPKKSEDEHFKDANEVLMSKGPHLLKEAILNAEPYPLKS</sequence>